<protein>
    <recommendedName>
        <fullName>Coat protein</fullName>
    </recommendedName>
</protein>
<reference key="1">
    <citation type="journal article" date="1991" name="J. Gen. Virol.">
        <title>Nucleotide sequence of raspberry bushy dwarf virus RNA-3.</title>
        <authorList>
            <person name="Mayo M.A."/>
            <person name="Jolly C.A."/>
            <person name="Murant A.F."/>
            <person name="Raschke J.H."/>
        </authorList>
    </citation>
    <scope>NUCLEOTIDE SEQUENCE [MRNA]</scope>
    <source>
        <strain>Isolate R15</strain>
    </source>
</reference>
<organismHost>
    <name type="scientific">Rubus idaeus</name>
    <name type="common">Raspberry</name>
    <dbReference type="NCBI Taxonomy" id="32247"/>
</organismHost>
<organismHost>
    <name type="scientific">Rubus occidentalis</name>
    <name type="common">Black raspberry</name>
    <dbReference type="NCBI Taxonomy" id="75079"/>
</organismHost>
<organismHost>
    <name type="scientific">Rubus ursinus</name>
    <name type="common">California blackberry</name>
    <dbReference type="NCBI Taxonomy" id="75100"/>
</organismHost>
<organism>
    <name type="scientific">Raspberry bushy dwarf virus</name>
    <name type="common">RBDV</name>
    <dbReference type="NCBI Taxonomy" id="12451"/>
    <lineage>
        <taxon>Viruses</taxon>
        <taxon>Riboviria</taxon>
        <taxon>Orthornavirae</taxon>
        <taxon>Kitrinoviricota</taxon>
        <taxon>Alsuviricetes</taxon>
        <taxon>Martellivirales</taxon>
        <taxon>Mayoviridae</taxon>
        <taxon>Idaeovirus</taxon>
        <taxon>Idaeovirus rubi</taxon>
    </lineage>
</organism>
<sequence>MSKKAVPPIVKAQYELYNRKLNRAIKVSGSQKKLDASFVGFSESSNPETGKPHADMSMSAKVKRVNTWLKNFDREYWENQFASKPIPRPAKQVLKGSSSKSQQRDEGEVVFTRKDSQKSVRTVSYWVCTPEKSMKPLKYKEDENVVEVTFNDLAAQKAGDKLVSILLEINVVGGAVDDKGRVAVLEKDAAVTVDYLLGSPYEAINLVSGLNKINFRSMTDVVDSIPSLLNERKVCVFQNDDSSSFYIRKWANFLQEVSAVLPVGTGKSSTIVLT</sequence>
<name>COAT_RBDV</name>
<accession>P23629</accession>
<comment type="subcellular location">
    <subcellularLocation>
        <location evidence="2">Virion</location>
    </subcellularLocation>
</comment>
<keyword id="KW-0167">Capsid protein</keyword>
<keyword id="KW-0946">Virion</keyword>
<feature type="chain" id="PRO_0000222538" description="Coat protein">
    <location>
        <begin position="1"/>
        <end position="274"/>
    </location>
</feature>
<feature type="region of interest" description="Disordered" evidence="1">
    <location>
        <begin position="88"/>
        <end position="112"/>
    </location>
</feature>
<feature type="compositionally biased region" description="Basic and acidic residues" evidence="1">
    <location>
        <begin position="102"/>
        <end position="112"/>
    </location>
</feature>
<dbReference type="EMBL" id="D01052">
    <property type="protein sequence ID" value="BAA00855.1"/>
    <property type="molecule type" value="mRNA"/>
</dbReference>
<dbReference type="PIR" id="JQ0936">
    <property type="entry name" value="VCWURB"/>
</dbReference>
<dbReference type="SMR" id="P23629"/>
<dbReference type="GO" id="GO:0019028">
    <property type="term" value="C:viral capsid"/>
    <property type="evidence" value="ECO:0007669"/>
    <property type="project" value="UniProtKB-KW"/>
</dbReference>
<dbReference type="InterPro" id="IPR009516">
    <property type="entry name" value="RBDV_coat"/>
</dbReference>
<dbReference type="Pfam" id="PF06593">
    <property type="entry name" value="RBDV_coat"/>
    <property type="match status" value="1"/>
</dbReference>
<proteinExistence type="evidence at transcript level"/>
<evidence type="ECO:0000256" key="1">
    <source>
        <dbReference type="SAM" id="MobiDB-lite"/>
    </source>
</evidence>
<evidence type="ECO:0000305" key="2"/>